<protein>
    <recommendedName>
        <fullName evidence="1">Coproporphyrin III ferrochelatase 1</fullName>
        <ecNumber evidence="1">4.99.1.9</ecNumber>
    </recommendedName>
</protein>
<evidence type="ECO:0000255" key="1">
    <source>
        <dbReference type="HAMAP-Rule" id="MF_00323"/>
    </source>
</evidence>
<gene>
    <name evidence="1" type="primary">cpfC1</name>
    <name type="ordered locus">BCE33L0987</name>
</gene>
<reference key="1">
    <citation type="journal article" date="2006" name="J. Bacteriol.">
        <title>Pathogenomic sequence analysis of Bacillus cereus and Bacillus thuringiensis isolates closely related to Bacillus anthracis.</title>
        <authorList>
            <person name="Han C.S."/>
            <person name="Xie G."/>
            <person name="Challacombe J.F."/>
            <person name="Altherr M.R."/>
            <person name="Bhotika S.S."/>
            <person name="Bruce D."/>
            <person name="Campbell C.S."/>
            <person name="Campbell M.L."/>
            <person name="Chen J."/>
            <person name="Chertkov O."/>
            <person name="Cleland C."/>
            <person name="Dimitrijevic M."/>
            <person name="Doggett N.A."/>
            <person name="Fawcett J.J."/>
            <person name="Glavina T."/>
            <person name="Goodwin L.A."/>
            <person name="Hill K.K."/>
            <person name="Hitchcock P."/>
            <person name="Jackson P.J."/>
            <person name="Keim P."/>
            <person name="Kewalramani A.R."/>
            <person name="Longmire J."/>
            <person name="Lucas S."/>
            <person name="Malfatti S."/>
            <person name="McMurry K."/>
            <person name="Meincke L.J."/>
            <person name="Misra M."/>
            <person name="Moseman B.L."/>
            <person name="Mundt M."/>
            <person name="Munk A.C."/>
            <person name="Okinaka R.T."/>
            <person name="Parson-Quintana B."/>
            <person name="Reilly L.P."/>
            <person name="Richardson P."/>
            <person name="Robinson D.L."/>
            <person name="Rubin E."/>
            <person name="Saunders E."/>
            <person name="Tapia R."/>
            <person name="Tesmer J.G."/>
            <person name="Thayer N."/>
            <person name="Thompson L.S."/>
            <person name="Tice H."/>
            <person name="Ticknor L.O."/>
            <person name="Wills P.L."/>
            <person name="Brettin T.S."/>
            <person name="Gilna P."/>
        </authorList>
    </citation>
    <scope>NUCLEOTIDE SEQUENCE [LARGE SCALE GENOMIC DNA]</scope>
    <source>
        <strain>ZK / E33L</strain>
    </source>
</reference>
<comment type="function">
    <text evidence="1">Involved in coproporphyrin-dependent heme b biosynthesis. Catalyzes the insertion of ferrous iron into coproporphyrin III to form Fe-coproporphyrin III.</text>
</comment>
<comment type="catalytic activity">
    <reaction evidence="1">
        <text>Fe-coproporphyrin III + 2 H(+) = coproporphyrin III + Fe(2+)</text>
        <dbReference type="Rhea" id="RHEA:49572"/>
        <dbReference type="ChEBI" id="CHEBI:15378"/>
        <dbReference type="ChEBI" id="CHEBI:29033"/>
        <dbReference type="ChEBI" id="CHEBI:68438"/>
        <dbReference type="ChEBI" id="CHEBI:131725"/>
        <dbReference type="EC" id="4.99.1.9"/>
    </reaction>
    <physiologicalReaction direction="right-to-left" evidence="1">
        <dbReference type="Rhea" id="RHEA:49574"/>
    </physiologicalReaction>
</comment>
<comment type="pathway">
    <text evidence="1">Porphyrin-containing compound metabolism; protoheme biosynthesis.</text>
</comment>
<comment type="subcellular location">
    <subcellularLocation>
        <location evidence="1">Cytoplasm</location>
    </subcellularLocation>
</comment>
<comment type="similarity">
    <text evidence="1">Belongs to the ferrochelatase family.</text>
</comment>
<organism>
    <name type="scientific">Bacillus cereus (strain ZK / E33L)</name>
    <dbReference type="NCBI Taxonomy" id="288681"/>
    <lineage>
        <taxon>Bacteria</taxon>
        <taxon>Bacillati</taxon>
        <taxon>Bacillota</taxon>
        <taxon>Bacilli</taxon>
        <taxon>Bacillales</taxon>
        <taxon>Bacillaceae</taxon>
        <taxon>Bacillus</taxon>
        <taxon>Bacillus cereus group</taxon>
    </lineage>
</organism>
<name>CPFC1_BACCZ</name>
<accession>Q63ES4</accession>
<keyword id="KW-0963">Cytoplasm</keyword>
<keyword id="KW-0350">Heme biosynthesis</keyword>
<keyword id="KW-0408">Iron</keyword>
<keyword id="KW-0456">Lyase</keyword>
<keyword id="KW-0479">Metal-binding</keyword>
<keyword id="KW-0627">Porphyrin biosynthesis</keyword>
<dbReference type="EC" id="4.99.1.9" evidence="1"/>
<dbReference type="EMBL" id="CP000001">
    <property type="protein sequence ID" value="AAU19259.1"/>
    <property type="molecule type" value="Genomic_DNA"/>
</dbReference>
<dbReference type="SMR" id="Q63ES4"/>
<dbReference type="KEGG" id="bcz:BCE33L0987"/>
<dbReference type="PATRIC" id="fig|288681.22.peg.4582"/>
<dbReference type="UniPathway" id="UPA00252"/>
<dbReference type="Proteomes" id="UP000002612">
    <property type="component" value="Chromosome"/>
</dbReference>
<dbReference type="GO" id="GO:0005737">
    <property type="term" value="C:cytoplasm"/>
    <property type="evidence" value="ECO:0007669"/>
    <property type="project" value="UniProtKB-SubCell"/>
</dbReference>
<dbReference type="GO" id="GO:0004325">
    <property type="term" value="F:ferrochelatase activity"/>
    <property type="evidence" value="ECO:0007669"/>
    <property type="project" value="UniProtKB-UniRule"/>
</dbReference>
<dbReference type="GO" id="GO:0046872">
    <property type="term" value="F:metal ion binding"/>
    <property type="evidence" value="ECO:0007669"/>
    <property type="project" value="UniProtKB-KW"/>
</dbReference>
<dbReference type="GO" id="GO:0006783">
    <property type="term" value="P:heme biosynthetic process"/>
    <property type="evidence" value="ECO:0007669"/>
    <property type="project" value="UniProtKB-UniRule"/>
</dbReference>
<dbReference type="CDD" id="cd00419">
    <property type="entry name" value="Ferrochelatase_C"/>
    <property type="match status" value="1"/>
</dbReference>
<dbReference type="CDD" id="cd03411">
    <property type="entry name" value="Ferrochelatase_N"/>
    <property type="match status" value="1"/>
</dbReference>
<dbReference type="FunFam" id="3.40.50.1400:FF:000009">
    <property type="entry name" value="Ferrochelatase"/>
    <property type="match status" value="1"/>
</dbReference>
<dbReference type="Gene3D" id="3.40.50.1400">
    <property type="match status" value="2"/>
</dbReference>
<dbReference type="HAMAP" id="MF_00323">
    <property type="entry name" value="Ferrochelatase"/>
    <property type="match status" value="1"/>
</dbReference>
<dbReference type="InterPro" id="IPR001015">
    <property type="entry name" value="Ferrochelatase"/>
</dbReference>
<dbReference type="InterPro" id="IPR019772">
    <property type="entry name" value="Ferrochelatase_AS"/>
</dbReference>
<dbReference type="InterPro" id="IPR033644">
    <property type="entry name" value="Ferrochelatase_C"/>
</dbReference>
<dbReference type="InterPro" id="IPR033659">
    <property type="entry name" value="Ferrochelatase_N"/>
</dbReference>
<dbReference type="NCBIfam" id="TIGR00109">
    <property type="entry name" value="hemH"/>
    <property type="match status" value="1"/>
</dbReference>
<dbReference type="NCBIfam" id="NF009095">
    <property type="entry name" value="PRK12435.1"/>
    <property type="match status" value="1"/>
</dbReference>
<dbReference type="PANTHER" id="PTHR11108">
    <property type="entry name" value="FERROCHELATASE"/>
    <property type="match status" value="1"/>
</dbReference>
<dbReference type="PANTHER" id="PTHR11108:SF1">
    <property type="entry name" value="FERROCHELATASE, MITOCHONDRIAL"/>
    <property type="match status" value="1"/>
</dbReference>
<dbReference type="Pfam" id="PF00762">
    <property type="entry name" value="Ferrochelatase"/>
    <property type="match status" value="1"/>
</dbReference>
<dbReference type="SUPFAM" id="SSF53800">
    <property type="entry name" value="Chelatase"/>
    <property type="match status" value="1"/>
</dbReference>
<dbReference type="PROSITE" id="PS00534">
    <property type="entry name" value="FERROCHELATASE"/>
    <property type="match status" value="1"/>
</dbReference>
<sequence length="311" mass="35330">MKKKIGLLVMAYGTPYKEEDIERYYTHIRRGRKPSPEMLEDLTERYRAIGGISPLATITLEQAKKLEKRLNEVQDEVEYHMYLGLKHIEPFIEDAVKEMHNDGIQDAIALVLAPHYSTFSVKSYVGRAQEEAEKLGNLTIHGIDSWYKEPKFIQYWVDAVKGIYNGMSDAEREKAVLIVSAHSLPEKIIAMGDPYPDQLNETADYIARGAEVANYAVGWQSAGNTPDPWIGPDVQDLTRELNEKYGYTSFVYAPVGFVAEHLEVLYDNDFECKVVTDEIGAKYYRPEMPNASDAFIDSLTDVVVKKKESVM</sequence>
<proteinExistence type="inferred from homology"/>
<feature type="chain" id="PRO_0000175108" description="Coproporphyrin III ferrochelatase 1">
    <location>
        <begin position="1"/>
        <end position="311"/>
    </location>
</feature>
<feature type="binding site" description="axial binding residue" evidence="1">
    <location>
        <position position="12"/>
    </location>
    <ligand>
        <name>Fe-coproporphyrin III</name>
        <dbReference type="ChEBI" id="CHEBI:68438"/>
    </ligand>
    <ligandPart>
        <name>Fe</name>
        <dbReference type="ChEBI" id="CHEBI:18248"/>
    </ligandPart>
</feature>
<feature type="binding site" evidence="1">
    <location>
        <position position="29"/>
    </location>
    <ligand>
        <name>Fe-coproporphyrin III</name>
        <dbReference type="ChEBI" id="CHEBI:68438"/>
    </ligand>
</feature>
<feature type="binding site" evidence="1">
    <location>
        <begin position="45"/>
        <end position="46"/>
    </location>
    <ligand>
        <name>Fe-coproporphyrin III</name>
        <dbReference type="ChEBI" id="CHEBI:68438"/>
    </ligand>
</feature>
<feature type="binding site" evidence="1">
    <location>
        <position position="53"/>
    </location>
    <ligand>
        <name>Fe-coproporphyrin III</name>
        <dbReference type="ChEBI" id="CHEBI:68438"/>
    </ligand>
</feature>
<feature type="binding site" evidence="1">
    <location>
        <position position="124"/>
    </location>
    <ligand>
        <name>Fe-coproporphyrin III</name>
        <dbReference type="ChEBI" id="CHEBI:68438"/>
    </ligand>
</feature>
<feature type="binding site" evidence="1">
    <location>
        <position position="182"/>
    </location>
    <ligand>
        <name>Fe(2+)</name>
        <dbReference type="ChEBI" id="CHEBI:29033"/>
    </ligand>
</feature>
<feature type="binding site" evidence="1">
    <location>
        <position position="263"/>
    </location>
    <ligand>
        <name>Fe(2+)</name>
        <dbReference type="ChEBI" id="CHEBI:29033"/>
    </ligand>
</feature>